<reference key="1">
    <citation type="journal article" date="2009" name="J. Bacteriol.">
        <title>Genomic sequencing reveals regulatory mutations and recombinational events in the widely used MC4100 lineage of Escherichia coli K-12.</title>
        <authorList>
            <person name="Ferenci T."/>
            <person name="Zhou Z."/>
            <person name="Betteridge T."/>
            <person name="Ren Y."/>
            <person name="Liu Y."/>
            <person name="Feng L."/>
            <person name="Reeves P.R."/>
            <person name="Wang L."/>
        </authorList>
    </citation>
    <scope>NUCLEOTIDE SEQUENCE [LARGE SCALE GENOMIC DNA]</scope>
    <source>
        <strain>K12 / MC4100 / BW2952</strain>
    </source>
</reference>
<name>LEXA_ECOBW</name>
<keyword id="KW-0068">Autocatalytic cleavage</keyword>
<keyword id="KW-0227">DNA damage</keyword>
<keyword id="KW-0234">DNA repair</keyword>
<keyword id="KW-0235">DNA replication</keyword>
<keyword id="KW-0238">DNA-binding</keyword>
<keyword id="KW-0378">Hydrolase</keyword>
<keyword id="KW-0678">Repressor</keyword>
<keyword id="KW-0742">SOS response</keyword>
<keyword id="KW-0804">Transcription</keyword>
<keyword id="KW-0805">Transcription regulation</keyword>
<dbReference type="EC" id="3.4.21.88" evidence="1"/>
<dbReference type="EMBL" id="CP001396">
    <property type="protein sequence ID" value="ACR62985.1"/>
    <property type="molecule type" value="Genomic_DNA"/>
</dbReference>
<dbReference type="RefSeq" id="WP_000646078.1">
    <property type="nucleotide sequence ID" value="NC_012759.1"/>
</dbReference>
<dbReference type="SMR" id="C5A136"/>
<dbReference type="MEROPS" id="S24.001"/>
<dbReference type="GeneID" id="93777788"/>
<dbReference type="KEGG" id="ebw:BWG_3756"/>
<dbReference type="HOGENOM" id="CLU_066192_45_3_6"/>
<dbReference type="GO" id="GO:0003677">
    <property type="term" value="F:DNA binding"/>
    <property type="evidence" value="ECO:0007669"/>
    <property type="project" value="UniProtKB-UniRule"/>
</dbReference>
<dbReference type="GO" id="GO:0004252">
    <property type="term" value="F:serine-type endopeptidase activity"/>
    <property type="evidence" value="ECO:0007669"/>
    <property type="project" value="UniProtKB-UniRule"/>
</dbReference>
<dbReference type="GO" id="GO:0006281">
    <property type="term" value="P:DNA repair"/>
    <property type="evidence" value="ECO:0007669"/>
    <property type="project" value="UniProtKB-UniRule"/>
</dbReference>
<dbReference type="GO" id="GO:0006260">
    <property type="term" value="P:DNA replication"/>
    <property type="evidence" value="ECO:0007669"/>
    <property type="project" value="UniProtKB-UniRule"/>
</dbReference>
<dbReference type="GO" id="GO:0045892">
    <property type="term" value="P:negative regulation of DNA-templated transcription"/>
    <property type="evidence" value="ECO:0007669"/>
    <property type="project" value="UniProtKB-UniRule"/>
</dbReference>
<dbReference type="GO" id="GO:0006508">
    <property type="term" value="P:proteolysis"/>
    <property type="evidence" value="ECO:0007669"/>
    <property type="project" value="InterPro"/>
</dbReference>
<dbReference type="GO" id="GO:0009432">
    <property type="term" value="P:SOS response"/>
    <property type="evidence" value="ECO:0007669"/>
    <property type="project" value="UniProtKB-UniRule"/>
</dbReference>
<dbReference type="CDD" id="cd06529">
    <property type="entry name" value="S24_LexA-like"/>
    <property type="match status" value="1"/>
</dbReference>
<dbReference type="FunFam" id="1.10.10.10:FF:000009">
    <property type="entry name" value="LexA repressor"/>
    <property type="match status" value="1"/>
</dbReference>
<dbReference type="FunFam" id="2.10.109.10:FF:000001">
    <property type="entry name" value="LexA repressor"/>
    <property type="match status" value="1"/>
</dbReference>
<dbReference type="Gene3D" id="2.10.109.10">
    <property type="entry name" value="Umud Fragment, subunit A"/>
    <property type="match status" value="1"/>
</dbReference>
<dbReference type="Gene3D" id="1.10.10.10">
    <property type="entry name" value="Winged helix-like DNA-binding domain superfamily/Winged helix DNA-binding domain"/>
    <property type="match status" value="1"/>
</dbReference>
<dbReference type="HAMAP" id="MF_00015">
    <property type="entry name" value="LexA"/>
    <property type="match status" value="1"/>
</dbReference>
<dbReference type="InterPro" id="IPR006200">
    <property type="entry name" value="LexA"/>
</dbReference>
<dbReference type="InterPro" id="IPR039418">
    <property type="entry name" value="LexA-like"/>
</dbReference>
<dbReference type="InterPro" id="IPR036286">
    <property type="entry name" value="LexA/Signal_pep-like_sf"/>
</dbReference>
<dbReference type="InterPro" id="IPR006199">
    <property type="entry name" value="LexA_DNA-bd_dom"/>
</dbReference>
<dbReference type="InterPro" id="IPR050077">
    <property type="entry name" value="LexA_repressor"/>
</dbReference>
<dbReference type="InterPro" id="IPR006197">
    <property type="entry name" value="Peptidase_S24_LexA"/>
</dbReference>
<dbReference type="InterPro" id="IPR015927">
    <property type="entry name" value="Peptidase_S24_S26A/B/C"/>
</dbReference>
<dbReference type="InterPro" id="IPR036388">
    <property type="entry name" value="WH-like_DNA-bd_sf"/>
</dbReference>
<dbReference type="InterPro" id="IPR036390">
    <property type="entry name" value="WH_DNA-bd_sf"/>
</dbReference>
<dbReference type="NCBIfam" id="TIGR00498">
    <property type="entry name" value="lexA"/>
    <property type="match status" value="1"/>
</dbReference>
<dbReference type="PANTHER" id="PTHR33516">
    <property type="entry name" value="LEXA REPRESSOR"/>
    <property type="match status" value="1"/>
</dbReference>
<dbReference type="PANTHER" id="PTHR33516:SF2">
    <property type="entry name" value="LEXA REPRESSOR-RELATED"/>
    <property type="match status" value="1"/>
</dbReference>
<dbReference type="Pfam" id="PF01726">
    <property type="entry name" value="LexA_DNA_bind"/>
    <property type="match status" value="1"/>
</dbReference>
<dbReference type="Pfam" id="PF00717">
    <property type="entry name" value="Peptidase_S24"/>
    <property type="match status" value="1"/>
</dbReference>
<dbReference type="PRINTS" id="PR00726">
    <property type="entry name" value="LEXASERPTASE"/>
</dbReference>
<dbReference type="SUPFAM" id="SSF51306">
    <property type="entry name" value="LexA/Signal peptidase"/>
    <property type="match status" value="1"/>
</dbReference>
<dbReference type="SUPFAM" id="SSF46785">
    <property type="entry name" value="Winged helix' DNA-binding domain"/>
    <property type="match status" value="1"/>
</dbReference>
<sequence length="202" mass="22358">MKALTARQQEVFDLIRDHISQTGMPPTRAEIAQRLGFRSPNAAEEHLKALARKGVIEIVSGASRGIRLLQEEEEGLPLVGRVAAGEPLLAQQHIEGHYQVDPSLFKPNADFLLRVSGMSMKDIGIMDGDLLAVHKTQDVRNGQVVVARIDDEVTVKRLKKQGNKVELLPENSEFKPIVVDLRQQSFTIEGLAVGVIRNGDWL</sequence>
<proteinExistence type="inferred from homology"/>
<evidence type="ECO:0000255" key="1">
    <source>
        <dbReference type="HAMAP-Rule" id="MF_00015"/>
    </source>
</evidence>
<feature type="chain" id="PRO_1000201819" description="LexA repressor">
    <location>
        <begin position="1"/>
        <end position="202"/>
    </location>
</feature>
<feature type="DNA-binding region" description="H-T-H motif" evidence="1">
    <location>
        <begin position="28"/>
        <end position="48"/>
    </location>
</feature>
<feature type="active site" description="For autocatalytic cleavage activity" evidence="1">
    <location>
        <position position="119"/>
    </location>
</feature>
<feature type="active site" description="For autocatalytic cleavage activity" evidence="1">
    <location>
        <position position="156"/>
    </location>
</feature>
<feature type="site" description="Cleavage; by autolysis" evidence="1">
    <location>
        <begin position="84"/>
        <end position="85"/>
    </location>
</feature>
<comment type="function">
    <text evidence="1">Represses a number of genes involved in the response to DNA damage (SOS response), including recA and lexA. Binds to the 16 bp palindromic sequence 5'-CTGTATATATATACAG-3'. In the presence of single-stranded DNA, RecA interacts with LexA causing an autocatalytic cleavage which disrupts the DNA-binding part of LexA, leading to derepression of the SOS regulon and eventually DNA repair.</text>
</comment>
<comment type="catalytic activity">
    <reaction evidence="1">
        <text>Hydrolysis of Ala-|-Gly bond in repressor LexA.</text>
        <dbReference type="EC" id="3.4.21.88"/>
    </reaction>
</comment>
<comment type="subunit">
    <text evidence="1">Homodimer.</text>
</comment>
<comment type="similarity">
    <text evidence="1">Belongs to the peptidase S24 family.</text>
</comment>
<accession>C5A136</accession>
<protein>
    <recommendedName>
        <fullName evidence="1">LexA repressor</fullName>
        <ecNumber evidence="1">3.4.21.88</ecNumber>
    </recommendedName>
</protein>
<gene>
    <name evidence="1" type="primary">lexA</name>
    <name type="ordered locus">BWG_3756</name>
</gene>
<organism>
    <name type="scientific">Escherichia coli (strain K12 / MC4100 / BW2952)</name>
    <dbReference type="NCBI Taxonomy" id="595496"/>
    <lineage>
        <taxon>Bacteria</taxon>
        <taxon>Pseudomonadati</taxon>
        <taxon>Pseudomonadota</taxon>
        <taxon>Gammaproteobacteria</taxon>
        <taxon>Enterobacterales</taxon>
        <taxon>Enterobacteriaceae</taxon>
        <taxon>Escherichia</taxon>
    </lineage>
</organism>